<sequence length="715" mass="80378">MGTSLYRSTLLSTGGFSVSDYIRKFTKNKPDVNNIQPNVGFCHQSTQTSQQVKEVISAELELQQPEVTLPNDPSSQHSPEAHTGASEPLKPVSAGESSKALQKAKEISVKSSEPTHVQTFAPAVHLEQIDVHNVPKQETNSLVAAPADAKCVIETMTKVEKDIALQQERALERADDSHVANKVFLKSIIPGQQLEKIEDPQQQAEVSLFVDEDSLEKSVPGQHLDKKMEVLQKQAKDLPVVDEDSLNLSAPGQRQLEEKVDVPEKAEKKIDEAHKKMEEVPRKDELCIEKPVIRHAGIKTQHEETMGMETTVPKHDESKCPTETYVEKTENKNADVTLESDKIMICAVSPQNTSLDEDEKSKAAPLRKVESTLLIIDDSPPLPAPFDHRIVSAKQVPINSYYAVNPVEVLGGGRFGQVHKCAELSSGLTLAAKIIKVRGMKERDEVKNEIGVMNQLNHVNLIQLYDAFESRTNLTLIMEYVEGGELFERIIDESYQLTELDAIVFTRQICEGVQYLHQQYILHLDLKPENILCVNSTGNQIKIIDFGLARKYRPREKLKVNFGTPEFLAPEVVNYDFVSFPTDMWSVGVITYMLLSGLSPFMGDNDAETMNNILHAKWEFDTEAFENVSEEAKDFISSLLVSAKCSRLSASGCMKHSWLNNLEDKAKMYKVRLKSQMMLQRYLVAHRQWKKHFYAVAAANRLKRFQQSRSISTPN</sequence>
<evidence type="ECO:0000250" key="1"/>
<evidence type="ECO:0000255" key="2">
    <source>
        <dbReference type="PROSITE-ProRule" id="PRU00159"/>
    </source>
</evidence>
<evidence type="ECO:0000255" key="3">
    <source>
        <dbReference type="PROSITE-ProRule" id="PRU10027"/>
    </source>
</evidence>
<evidence type="ECO:0000256" key="4">
    <source>
        <dbReference type="SAM" id="MobiDB-lite"/>
    </source>
</evidence>
<evidence type="ECO:0000269" key="5">
    <source>
    </source>
</evidence>
<evidence type="ECO:0000305" key="6"/>
<feature type="chain" id="PRO_0000419666" description="Myosin light chain kinase 3">
    <location>
        <begin position="1"/>
        <end position="715"/>
    </location>
</feature>
<feature type="domain" description="Protein kinase" evidence="2">
    <location>
        <begin position="404"/>
        <end position="659"/>
    </location>
</feature>
<feature type="region of interest" description="Disordered" evidence="4">
    <location>
        <begin position="67"/>
        <end position="114"/>
    </location>
</feature>
<feature type="active site" description="Proton acceptor" evidence="2 3">
    <location>
        <position position="525"/>
    </location>
</feature>
<feature type="binding site" evidence="2">
    <location>
        <begin position="410"/>
        <end position="418"/>
    </location>
    <ligand>
        <name>ATP</name>
        <dbReference type="ChEBI" id="CHEBI:30616"/>
    </ligand>
</feature>
<feature type="binding site" evidence="2">
    <location>
        <position position="433"/>
    </location>
    <ligand>
        <name>ATP</name>
        <dbReference type="ChEBI" id="CHEBI:30616"/>
    </ligand>
</feature>
<dbReference type="EC" id="2.7.11.18"/>
<dbReference type="EMBL" id="AB267907">
    <property type="protein sequence ID" value="BAF80631.1"/>
    <property type="molecule type" value="mRNA"/>
</dbReference>
<dbReference type="EMBL" id="AL928906">
    <property type="protein sequence ID" value="CAE49228.1"/>
    <property type="status" value="ALT_SEQ"/>
    <property type="molecule type" value="Genomic_DNA"/>
</dbReference>
<dbReference type="RefSeq" id="NP_001099057.1">
    <property type="nucleotide sequence ID" value="NM_001105587.2"/>
</dbReference>
<dbReference type="SMR" id="A8C984"/>
<dbReference type="FunCoup" id="A8C984">
    <property type="interactions" value="263"/>
</dbReference>
<dbReference type="STRING" id="7955.ENSDARP00000102547"/>
<dbReference type="PaxDb" id="7955-ENSDARP00000102547"/>
<dbReference type="PeptideAtlas" id="A8C984"/>
<dbReference type="GeneID" id="561635"/>
<dbReference type="KEGG" id="dre:561635"/>
<dbReference type="AGR" id="ZFIN:ZDB-GENE-030131-3497"/>
<dbReference type="CTD" id="91807"/>
<dbReference type="ZFIN" id="ZDB-GENE-030131-3497">
    <property type="gene designation" value="mylk3"/>
</dbReference>
<dbReference type="eggNOG" id="KOG0032">
    <property type="taxonomic scope" value="Eukaryota"/>
</dbReference>
<dbReference type="HOGENOM" id="CLU_023683_0_0_1"/>
<dbReference type="InParanoid" id="A8C984"/>
<dbReference type="OrthoDB" id="10260894at2759"/>
<dbReference type="PhylomeDB" id="A8C984"/>
<dbReference type="TreeFam" id="TF314166"/>
<dbReference type="PRO" id="PR:A8C984"/>
<dbReference type="Proteomes" id="UP000000437">
    <property type="component" value="Chromosome 7"/>
</dbReference>
<dbReference type="GO" id="GO:0005737">
    <property type="term" value="C:cytoplasm"/>
    <property type="evidence" value="ECO:0000318"/>
    <property type="project" value="GO_Central"/>
</dbReference>
<dbReference type="GO" id="GO:0005524">
    <property type="term" value="F:ATP binding"/>
    <property type="evidence" value="ECO:0007669"/>
    <property type="project" value="UniProtKB-KW"/>
</dbReference>
<dbReference type="GO" id="GO:0004687">
    <property type="term" value="F:myosin light chain kinase activity"/>
    <property type="evidence" value="ECO:0000318"/>
    <property type="project" value="GO_Central"/>
</dbReference>
<dbReference type="GO" id="GO:0055003">
    <property type="term" value="P:cardiac myofibril assembly"/>
    <property type="evidence" value="ECO:0000318"/>
    <property type="project" value="GO_Central"/>
</dbReference>
<dbReference type="GO" id="GO:0003007">
    <property type="term" value="P:heart morphogenesis"/>
    <property type="evidence" value="ECO:0000315"/>
    <property type="project" value="ZFIN"/>
</dbReference>
<dbReference type="GO" id="GO:0045214">
    <property type="term" value="P:sarcomere organization"/>
    <property type="evidence" value="ECO:0000318"/>
    <property type="project" value="GO_Central"/>
</dbReference>
<dbReference type="GO" id="GO:0048769">
    <property type="term" value="P:sarcomerogenesis"/>
    <property type="evidence" value="ECO:0000315"/>
    <property type="project" value="BHF-UCL"/>
</dbReference>
<dbReference type="GO" id="GO:0007165">
    <property type="term" value="P:signal transduction"/>
    <property type="evidence" value="ECO:0000318"/>
    <property type="project" value="GO_Central"/>
</dbReference>
<dbReference type="GO" id="GO:0055005">
    <property type="term" value="P:ventricular cardiac myofibril assembly"/>
    <property type="evidence" value="ECO:0000315"/>
    <property type="project" value="BHF-UCL"/>
</dbReference>
<dbReference type="CDD" id="cd14192">
    <property type="entry name" value="STKc_MLCK3"/>
    <property type="match status" value="1"/>
</dbReference>
<dbReference type="FunFam" id="3.30.200.20:FF:000196">
    <property type="entry name" value="Myosin light chain kinase family, member 4"/>
    <property type="match status" value="1"/>
</dbReference>
<dbReference type="FunFam" id="1.10.510.10:FF:000135">
    <property type="entry name" value="Putative myosin light chain kinase 3"/>
    <property type="match status" value="1"/>
</dbReference>
<dbReference type="Gene3D" id="3.30.200.20">
    <property type="entry name" value="Phosphorylase Kinase, domain 1"/>
    <property type="match status" value="1"/>
</dbReference>
<dbReference type="Gene3D" id="1.10.510.10">
    <property type="entry name" value="Transferase(Phosphotransferase) domain 1"/>
    <property type="match status" value="1"/>
</dbReference>
<dbReference type="InterPro" id="IPR011009">
    <property type="entry name" value="Kinase-like_dom_sf"/>
</dbReference>
<dbReference type="InterPro" id="IPR000719">
    <property type="entry name" value="Prot_kinase_dom"/>
</dbReference>
<dbReference type="InterPro" id="IPR017441">
    <property type="entry name" value="Protein_kinase_ATP_BS"/>
</dbReference>
<dbReference type="InterPro" id="IPR008271">
    <property type="entry name" value="Ser/Thr_kinase_AS"/>
</dbReference>
<dbReference type="PANTHER" id="PTHR24342:SF20">
    <property type="entry name" value="MYOSIN LIGHT CHAIN KINASE, SMOOTH MUSCLE"/>
    <property type="match status" value="1"/>
</dbReference>
<dbReference type="PANTHER" id="PTHR24342">
    <property type="entry name" value="SERINE/THREONINE-PROTEIN KINASE 17"/>
    <property type="match status" value="1"/>
</dbReference>
<dbReference type="Pfam" id="PF00069">
    <property type="entry name" value="Pkinase"/>
    <property type="match status" value="1"/>
</dbReference>
<dbReference type="SMART" id="SM00220">
    <property type="entry name" value="S_TKc"/>
    <property type="match status" value="1"/>
</dbReference>
<dbReference type="SUPFAM" id="SSF56112">
    <property type="entry name" value="Protein kinase-like (PK-like)"/>
    <property type="match status" value="1"/>
</dbReference>
<dbReference type="PROSITE" id="PS00107">
    <property type="entry name" value="PROTEIN_KINASE_ATP"/>
    <property type="match status" value="1"/>
</dbReference>
<dbReference type="PROSITE" id="PS50011">
    <property type="entry name" value="PROTEIN_KINASE_DOM"/>
    <property type="match status" value="1"/>
</dbReference>
<dbReference type="PROSITE" id="PS00108">
    <property type="entry name" value="PROTEIN_KINASE_ST"/>
    <property type="match status" value="1"/>
</dbReference>
<name>MYLK3_DANRE</name>
<reference key="1">
    <citation type="journal article" date="2007" name="J. Clin. Invest.">
        <title>A cardiac myosin light chain kinase regulates sarcomere assembly in the vertebrate heart.</title>
        <authorList>
            <person name="Seguchi O."/>
            <person name="Takashima S."/>
            <person name="Yamazaki S."/>
            <person name="Asakura M."/>
            <person name="Asano Y."/>
            <person name="Shintani Y."/>
            <person name="Wakeno M."/>
            <person name="Minamino T."/>
            <person name="Kondo H."/>
            <person name="Furukawa H."/>
            <person name="Nakamaru K."/>
            <person name="Naito A."/>
            <person name="Takahashi T."/>
            <person name="Ohtsuka T."/>
            <person name="Kawakami K."/>
            <person name="Isomura T."/>
            <person name="Kitamura S."/>
            <person name="Tomoike H."/>
            <person name="Mochizuki N."/>
            <person name="Kitakaze M."/>
        </authorList>
    </citation>
    <scope>NUCLEOTIDE SEQUENCE [MRNA]</scope>
    <scope>FUNCTION</scope>
    <scope>DEVELOPMENTAL STAGE</scope>
</reference>
<reference key="2">
    <citation type="journal article" date="2013" name="Nature">
        <title>The zebrafish reference genome sequence and its relationship to the human genome.</title>
        <authorList>
            <person name="Howe K."/>
            <person name="Clark M.D."/>
            <person name="Torroja C.F."/>
            <person name="Torrance J."/>
            <person name="Berthelot C."/>
            <person name="Muffato M."/>
            <person name="Collins J.E."/>
            <person name="Humphray S."/>
            <person name="McLaren K."/>
            <person name="Matthews L."/>
            <person name="McLaren S."/>
            <person name="Sealy I."/>
            <person name="Caccamo M."/>
            <person name="Churcher C."/>
            <person name="Scott C."/>
            <person name="Barrett J.C."/>
            <person name="Koch R."/>
            <person name="Rauch G.J."/>
            <person name="White S."/>
            <person name="Chow W."/>
            <person name="Kilian B."/>
            <person name="Quintais L.T."/>
            <person name="Guerra-Assuncao J.A."/>
            <person name="Zhou Y."/>
            <person name="Gu Y."/>
            <person name="Yen J."/>
            <person name="Vogel J.H."/>
            <person name="Eyre T."/>
            <person name="Redmond S."/>
            <person name="Banerjee R."/>
            <person name="Chi J."/>
            <person name="Fu B."/>
            <person name="Langley E."/>
            <person name="Maguire S.F."/>
            <person name="Laird G.K."/>
            <person name="Lloyd D."/>
            <person name="Kenyon E."/>
            <person name="Donaldson S."/>
            <person name="Sehra H."/>
            <person name="Almeida-King J."/>
            <person name="Loveland J."/>
            <person name="Trevanion S."/>
            <person name="Jones M."/>
            <person name="Quail M."/>
            <person name="Willey D."/>
            <person name="Hunt A."/>
            <person name="Burton J."/>
            <person name="Sims S."/>
            <person name="McLay K."/>
            <person name="Plumb B."/>
            <person name="Davis J."/>
            <person name="Clee C."/>
            <person name="Oliver K."/>
            <person name="Clark R."/>
            <person name="Riddle C."/>
            <person name="Elliot D."/>
            <person name="Threadgold G."/>
            <person name="Harden G."/>
            <person name="Ware D."/>
            <person name="Begum S."/>
            <person name="Mortimore B."/>
            <person name="Kerry G."/>
            <person name="Heath P."/>
            <person name="Phillimore B."/>
            <person name="Tracey A."/>
            <person name="Corby N."/>
            <person name="Dunn M."/>
            <person name="Johnson C."/>
            <person name="Wood J."/>
            <person name="Clark S."/>
            <person name="Pelan S."/>
            <person name="Griffiths G."/>
            <person name="Smith M."/>
            <person name="Glithero R."/>
            <person name="Howden P."/>
            <person name="Barker N."/>
            <person name="Lloyd C."/>
            <person name="Stevens C."/>
            <person name="Harley J."/>
            <person name="Holt K."/>
            <person name="Panagiotidis G."/>
            <person name="Lovell J."/>
            <person name="Beasley H."/>
            <person name="Henderson C."/>
            <person name="Gordon D."/>
            <person name="Auger K."/>
            <person name="Wright D."/>
            <person name="Collins J."/>
            <person name="Raisen C."/>
            <person name="Dyer L."/>
            <person name="Leung K."/>
            <person name="Robertson L."/>
            <person name="Ambridge K."/>
            <person name="Leongamornlert D."/>
            <person name="McGuire S."/>
            <person name="Gilderthorp R."/>
            <person name="Griffiths C."/>
            <person name="Manthravadi D."/>
            <person name="Nichol S."/>
            <person name="Barker G."/>
            <person name="Whitehead S."/>
            <person name="Kay M."/>
            <person name="Brown J."/>
            <person name="Murnane C."/>
            <person name="Gray E."/>
            <person name="Humphries M."/>
            <person name="Sycamore N."/>
            <person name="Barker D."/>
            <person name="Saunders D."/>
            <person name="Wallis J."/>
            <person name="Babbage A."/>
            <person name="Hammond S."/>
            <person name="Mashreghi-Mohammadi M."/>
            <person name="Barr L."/>
            <person name="Martin S."/>
            <person name="Wray P."/>
            <person name="Ellington A."/>
            <person name="Matthews N."/>
            <person name="Ellwood M."/>
            <person name="Woodmansey R."/>
            <person name="Clark G."/>
            <person name="Cooper J."/>
            <person name="Tromans A."/>
            <person name="Grafham D."/>
            <person name="Skuce C."/>
            <person name="Pandian R."/>
            <person name="Andrews R."/>
            <person name="Harrison E."/>
            <person name="Kimberley A."/>
            <person name="Garnett J."/>
            <person name="Fosker N."/>
            <person name="Hall R."/>
            <person name="Garner P."/>
            <person name="Kelly D."/>
            <person name="Bird C."/>
            <person name="Palmer S."/>
            <person name="Gehring I."/>
            <person name="Berger A."/>
            <person name="Dooley C.M."/>
            <person name="Ersan-Urun Z."/>
            <person name="Eser C."/>
            <person name="Geiger H."/>
            <person name="Geisler M."/>
            <person name="Karotki L."/>
            <person name="Kirn A."/>
            <person name="Konantz J."/>
            <person name="Konantz M."/>
            <person name="Oberlander M."/>
            <person name="Rudolph-Geiger S."/>
            <person name="Teucke M."/>
            <person name="Lanz C."/>
            <person name="Raddatz G."/>
            <person name="Osoegawa K."/>
            <person name="Zhu B."/>
            <person name="Rapp A."/>
            <person name="Widaa S."/>
            <person name="Langford C."/>
            <person name="Yang F."/>
            <person name="Schuster S.C."/>
            <person name="Carter N.P."/>
            <person name="Harrow J."/>
            <person name="Ning Z."/>
            <person name="Herrero J."/>
            <person name="Searle S.M."/>
            <person name="Enright A."/>
            <person name="Geisler R."/>
            <person name="Plasterk R.H."/>
            <person name="Lee C."/>
            <person name="Westerfield M."/>
            <person name="de Jong P.J."/>
            <person name="Zon L.I."/>
            <person name="Postlethwait J.H."/>
            <person name="Nusslein-Volhard C."/>
            <person name="Hubbard T.J."/>
            <person name="Roest Crollius H."/>
            <person name="Rogers J."/>
            <person name="Stemple D.L."/>
        </authorList>
    </citation>
    <scope>NUCLEOTIDE SEQUENCE [LARGE SCALE GENOMIC DNA]</scope>
    <source>
        <strain>Tuebingen</strain>
    </source>
</reference>
<accession>A8C984</accession>
<accession>Q6ZM37</accession>
<gene>
    <name type="primary">mylk3</name>
    <name type="synonym">mlck</name>
</gene>
<keyword id="KW-0067">ATP-binding</keyword>
<keyword id="KW-0963">Cytoplasm</keyword>
<keyword id="KW-0418">Kinase</keyword>
<keyword id="KW-0547">Nucleotide-binding</keyword>
<keyword id="KW-1185">Reference proteome</keyword>
<keyword id="KW-0723">Serine/threonine-protein kinase</keyword>
<keyword id="KW-0808">Transferase</keyword>
<organism>
    <name type="scientific">Danio rerio</name>
    <name type="common">Zebrafish</name>
    <name type="synonym">Brachydanio rerio</name>
    <dbReference type="NCBI Taxonomy" id="7955"/>
    <lineage>
        <taxon>Eukaryota</taxon>
        <taxon>Metazoa</taxon>
        <taxon>Chordata</taxon>
        <taxon>Craniata</taxon>
        <taxon>Vertebrata</taxon>
        <taxon>Euteleostomi</taxon>
        <taxon>Actinopterygii</taxon>
        <taxon>Neopterygii</taxon>
        <taxon>Teleostei</taxon>
        <taxon>Ostariophysi</taxon>
        <taxon>Cypriniformes</taxon>
        <taxon>Danionidae</taxon>
        <taxon>Danioninae</taxon>
        <taxon>Danio</taxon>
    </lineage>
</organism>
<comment type="function">
    <text evidence="1 5">Kinase that phosphorylates MYL2 in vitro (By similarity). Increases cardiomyocyte contractility (By similarity). Required for sarcomere formation in the developing heart.</text>
</comment>
<comment type="catalytic activity">
    <reaction>
        <text>L-seryl-[myosin light chain] + ATP = O-phospho-L-seryl-[myosin light chain] + ADP + H(+)</text>
        <dbReference type="Rhea" id="RHEA:22004"/>
        <dbReference type="Rhea" id="RHEA-COMP:13684"/>
        <dbReference type="Rhea" id="RHEA-COMP:13685"/>
        <dbReference type="ChEBI" id="CHEBI:15378"/>
        <dbReference type="ChEBI" id="CHEBI:29999"/>
        <dbReference type="ChEBI" id="CHEBI:30616"/>
        <dbReference type="ChEBI" id="CHEBI:83421"/>
        <dbReference type="ChEBI" id="CHEBI:456216"/>
        <dbReference type="EC" id="2.7.11.18"/>
    </reaction>
</comment>
<comment type="catalytic activity">
    <reaction>
        <text>L-threonyl-[myosin light chain] + ATP = O-phospho-L-threonyl-[myosin light chain] + ADP + H(+)</text>
        <dbReference type="Rhea" id="RHEA:53900"/>
        <dbReference type="Rhea" id="RHEA-COMP:13686"/>
        <dbReference type="Rhea" id="RHEA-COMP:13687"/>
        <dbReference type="ChEBI" id="CHEBI:15378"/>
        <dbReference type="ChEBI" id="CHEBI:30013"/>
        <dbReference type="ChEBI" id="CHEBI:30616"/>
        <dbReference type="ChEBI" id="CHEBI:61977"/>
        <dbReference type="ChEBI" id="CHEBI:456216"/>
        <dbReference type="EC" id="2.7.11.18"/>
    </reaction>
</comment>
<comment type="cofactor">
    <cofactor evidence="1">
        <name>Mg(2+)</name>
        <dbReference type="ChEBI" id="CHEBI:18420"/>
    </cofactor>
</comment>
<comment type="subcellular location">
    <subcellularLocation>
        <location evidence="1">Cytoplasm</location>
    </subcellularLocation>
</comment>
<comment type="developmental stage">
    <text evidence="5">At 24 and 48 hours post fertilization, expressed only in the heart.</text>
</comment>
<comment type="PTM">
    <text evidence="1">Phosphorylated on serine residues.</text>
</comment>
<comment type="similarity">
    <text evidence="6">Belongs to the protein kinase superfamily. CAMK Ser/Thr protein kinase family.</text>
</comment>
<comment type="sequence caution" evidence="6">
    <conflict type="erroneous gene model prediction">
        <sequence resource="EMBL-CDS" id="CAE49228"/>
    </conflict>
</comment>
<proteinExistence type="evidence at transcript level"/>
<protein>
    <recommendedName>
        <fullName>Myosin light chain kinase 3</fullName>
        <ecNumber>2.7.11.18</ecNumber>
    </recommendedName>
    <alternativeName>
        <fullName>Cardiac-MyBP-C-associated Ca/CaM kinase</fullName>
        <shortName>Cardiac-MLCK</shortName>
    </alternativeName>
</protein>